<feature type="chain" id="PRO_0000068851" description="Protein archease">
    <location>
        <begin position="1"/>
        <end position="142"/>
    </location>
</feature>
<feature type="binding site" evidence="1">
    <location>
        <position position="12"/>
    </location>
    <ligand>
        <name>Ca(2+)</name>
        <dbReference type="ChEBI" id="CHEBI:29108"/>
    </ligand>
</feature>
<feature type="binding site" evidence="1">
    <location>
        <position position="141"/>
    </location>
    <ligand>
        <name>Ca(2+)</name>
        <dbReference type="ChEBI" id="CHEBI:29108"/>
    </ligand>
</feature>
<dbReference type="EMBL" id="AP006878">
    <property type="protein sequence ID" value="BAD84550.1"/>
    <property type="molecule type" value="Genomic_DNA"/>
</dbReference>
<dbReference type="RefSeq" id="WP_011249316.1">
    <property type="nucleotide sequence ID" value="NC_006624.1"/>
</dbReference>
<dbReference type="SMR" id="Q5JCY8"/>
<dbReference type="FunCoup" id="Q5JCY8">
    <property type="interactions" value="44"/>
</dbReference>
<dbReference type="STRING" id="69014.TK0361"/>
<dbReference type="EnsemblBacteria" id="BAD84550">
    <property type="protein sequence ID" value="BAD84550"/>
    <property type="gene ID" value="TK0361"/>
</dbReference>
<dbReference type="GeneID" id="78446866"/>
<dbReference type="KEGG" id="tko:TK0361"/>
<dbReference type="PATRIC" id="fig|69014.16.peg.358"/>
<dbReference type="eggNOG" id="arCOG04055">
    <property type="taxonomic scope" value="Archaea"/>
</dbReference>
<dbReference type="HOGENOM" id="CLU_111362_3_0_2"/>
<dbReference type="InParanoid" id="Q5JCY8"/>
<dbReference type="OrthoDB" id="8831at2157"/>
<dbReference type="PhylomeDB" id="Q5JCY8"/>
<dbReference type="Proteomes" id="UP000000536">
    <property type="component" value="Chromosome"/>
</dbReference>
<dbReference type="GO" id="GO:0005509">
    <property type="term" value="F:calcium ion binding"/>
    <property type="evidence" value="ECO:0007669"/>
    <property type="project" value="UniProtKB-UniRule"/>
</dbReference>
<dbReference type="GO" id="GO:0006388">
    <property type="term" value="P:tRNA splicing, via endonucleolytic cleavage and ligation"/>
    <property type="evidence" value="ECO:0007669"/>
    <property type="project" value="UniProtKB-UniRule"/>
</dbReference>
<dbReference type="FunFam" id="3.55.10.10:FF:000002">
    <property type="entry name" value="Archease, putative"/>
    <property type="match status" value="1"/>
</dbReference>
<dbReference type="Gene3D" id="3.55.10.10">
    <property type="entry name" value="Archease domain"/>
    <property type="match status" value="1"/>
</dbReference>
<dbReference type="HAMAP" id="MF_01222">
    <property type="entry name" value="Archease_arch"/>
    <property type="match status" value="1"/>
</dbReference>
<dbReference type="InterPro" id="IPR002804">
    <property type="entry name" value="Archease"/>
</dbReference>
<dbReference type="InterPro" id="IPR022952">
    <property type="entry name" value="Archease_arc"/>
</dbReference>
<dbReference type="InterPro" id="IPR023572">
    <property type="entry name" value="Archease_dom"/>
</dbReference>
<dbReference type="InterPro" id="IPR036820">
    <property type="entry name" value="Archease_dom_sf"/>
</dbReference>
<dbReference type="NCBIfam" id="NF001617">
    <property type="entry name" value="PRK00407.1"/>
    <property type="match status" value="1"/>
</dbReference>
<dbReference type="PANTHER" id="PTHR12682">
    <property type="entry name" value="ARCHEASE"/>
    <property type="match status" value="1"/>
</dbReference>
<dbReference type="PANTHER" id="PTHR12682:SF11">
    <property type="entry name" value="PROTEIN ARCHEASE"/>
    <property type="match status" value="1"/>
</dbReference>
<dbReference type="Pfam" id="PF01951">
    <property type="entry name" value="Archease"/>
    <property type="match status" value="1"/>
</dbReference>
<dbReference type="SUPFAM" id="SSF69819">
    <property type="entry name" value="MTH1598-like"/>
    <property type="match status" value="1"/>
</dbReference>
<name>ARCH_THEKO</name>
<organism>
    <name type="scientific">Thermococcus kodakarensis (strain ATCC BAA-918 / JCM 12380 / KOD1)</name>
    <name type="common">Pyrococcus kodakaraensis (strain KOD1)</name>
    <dbReference type="NCBI Taxonomy" id="69014"/>
    <lineage>
        <taxon>Archaea</taxon>
        <taxon>Methanobacteriati</taxon>
        <taxon>Methanobacteriota</taxon>
        <taxon>Thermococci</taxon>
        <taxon>Thermococcales</taxon>
        <taxon>Thermococcaceae</taxon>
        <taxon>Thermococcus</taxon>
    </lineage>
</organism>
<evidence type="ECO:0000250" key="1"/>
<evidence type="ECO:0000255" key="2">
    <source>
        <dbReference type="HAMAP-Rule" id="MF_01222"/>
    </source>
</evidence>
<reference key="1">
    <citation type="journal article" date="2005" name="Genome Res.">
        <title>Complete genome sequence of the hyperthermophilic archaeon Thermococcus kodakaraensis KOD1 and comparison with Pyrococcus genomes.</title>
        <authorList>
            <person name="Fukui T."/>
            <person name="Atomi H."/>
            <person name="Kanai T."/>
            <person name="Matsumi R."/>
            <person name="Fujiwara S."/>
            <person name="Imanaka T."/>
        </authorList>
    </citation>
    <scope>NUCLEOTIDE SEQUENCE [LARGE SCALE GENOMIC DNA]</scope>
    <source>
        <strain>ATCC BAA-918 / JCM 12380 / KOD1</strain>
    </source>
</reference>
<comment type="function">
    <text evidence="1">Activates the tRNA-splicing ligase complex by facilitating the enzymatic turnover of catalytic subunit RtcB. Acts by promoting the guanylylation of RtcB, a key intermediate step in tRNA ligation. Can also alter the NTP specificity of RtcB such that ATP, dGTP or ITP is used efficiently (By similarity).</text>
</comment>
<comment type="similarity">
    <text evidence="2">Belongs to the archease family.</text>
</comment>
<protein>
    <recommendedName>
        <fullName evidence="2">Protein archease</fullName>
    </recommendedName>
</protein>
<gene>
    <name type="ordered locus">TK0361</name>
</gene>
<keyword id="KW-0106">Calcium</keyword>
<keyword id="KW-0479">Metal-binding</keyword>
<keyword id="KW-1185">Reference proteome</keyword>
<keyword id="KW-0819">tRNA processing</keyword>
<accession>Q5JCY8</accession>
<proteinExistence type="inferred from homology"/>
<sequence>MRKWEHYEHTADIGVRGYGSTLEEAFEAVALGLFDVMVNVKKVEPKECREVEVEEEDLEALLYSFLEELLVLHDMEGLVFGDVKVRIEKTENGYKLKAKACGEVLNPEKHEPKEEVKAITYHDMKIEKLPDGRWMAQFVPDL</sequence>